<dbReference type="EMBL" id="M11486">
    <property type="protein sequence ID" value="AAB59857.1"/>
    <property type="molecule type" value="Genomic_RNA"/>
</dbReference>
<dbReference type="EMBL" id="X03149">
    <property type="protein sequence ID" value="CAA26928.1"/>
    <property type="molecule type" value="mRNA"/>
</dbReference>
<dbReference type="EMBL" id="U50362">
    <property type="protein sequence ID" value="AAB86663.1"/>
    <property type="molecule type" value="Genomic_RNA"/>
</dbReference>
<dbReference type="EMBL" id="U50363">
    <property type="protein sequence ID" value="AAB86675.1"/>
    <property type="molecule type" value="Genomic_RNA"/>
</dbReference>
<dbReference type="EMBL" id="U63644">
    <property type="protein sequence ID" value="AAC55969.1"/>
    <property type="molecule type" value="Genomic_RNA"/>
</dbReference>
<dbReference type="EMBL" id="AF035006">
    <property type="protein sequence ID" value="AAC14901.1"/>
    <property type="molecule type" value="Genomic_RNA"/>
</dbReference>
<dbReference type="PIR" id="A94048">
    <property type="entry name" value="MGNZ"/>
</dbReference>
<dbReference type="PDB" id="5WN9">
    <property type="method" value="X-ray"/>
    <property type="resolution" value="1.55 A"/>
    <property type="chains" value="A=168-196"/>
</dbReference>
<dbReference type="PDB" id="5WNA">
    <property type="method" value="X-ray"/>
    <property type="resolution" value="2.40 A"/>
    <property type="chains" value="A/B=161-197"/>
</dbReference>
<dbReference type="PDB" id="5WNB">
    <property type="method" value="X-ray"/>
    <property type="resolution" value="2.40 A"/>
    <property type="chains" value="A/B=162-172"/>
</dbReference>
<dbReference type="PDB" id="6UVO">
    <property type="method" value="X-ray"/>
    <property type="resolution" value="2.90 A"/>
    <property type="chains" value="D=157-197"/>
</dbReference>
<dbReference type="PDB" id="7T8W">
    <property type="method" value="X-ray"/>
    <property type="resolution" value="3.10 A"/>
    <property type="chains" value="D=157-197"/>
</dbReference>
<dbReference type="PDB" id="9CQA">
    <property type="method" value="X-ray"/>
    <property type="resolution" value="1.74 A"/>
    <property type="chains" value="A/B=157-197"/>
</dbReference>
<dbReference type="PDB" id="9CQB">
    <property type="method" value="X-ray"/>
    <property type="resolution" value="2.50 A"/>
    <property type="chains" value="D=157-197"/>
</dbReference>
<dbReference type="PDB" id="9CQD">
    <property type="method" value="X-ray"/>
    <property type="resolution" value="3.10 A"/>
    <property type="chains" value="A/M/N/S/T/U/V/j=157-197"/>
</dbReference>
<dbReference type="PDBsum" id="5WN9"/>
<dbReference type="PDBsum" id="5WNA"/>
<dbReference type="PDBsum" id="5WNB"/>
<dbReference type="PDBsum" id="6UVO"/>
<dbReference type="PDBsum" id="7T8W"/>
<dbReference type="PDBsum" id="9CQA"/>
<dbReference type="PDBsum" id="9CQB"/>
<dbReference type="PDBsum" id="9CQD"/>
<dbReference type="SMR" id="P03423"/>
<dbReference type="GlyCosmos" id="P03423">
    <property type="glycosylation" value="33 sites, No reported glycans"/>
</dbReference>
<dbReference type="iPTMnet" id="P03423"/>
<dbReference type="ABCD" id="P03423">
    <property type="antibodies" value="3 sequenced antibodies"/>
</dbReference>
<dbReference type="Reactome" id="R-HSA-9820960">
    <molecule id="P03423-1"/>
    <property type="pathway name" value="Respiratory syncytial virus (RSV) attachment and entry"/>
</dbReference>
<dbReference type="Reactome" id="R-HSA-9820962">
    <molecule id="P03423-1"/>
    <property type="pathway name" value="Assembly and release of respiratory syncytial virus (RSV) virions"/>
</dbReference>
<dbReference type="Reactome" id="R-HSA-9828721">
    <property type="pathway name" value="Translation of respiratory syncytial virus mRNAs"/>
</dbReference>
<dbReference type="Reactome" id="R-HSA-9828806">
    <property type="pathway name" value="Maturation of hRSV A proteins"/>
</dbReference>
<dbReference type="Reactome" id="R-HSA-9833110">
    <property type="pathway name" value="RSV-host interactions"/>
</dbReference>
<dbReference type="Proteomes" id="UP000007678">
    <property type="component" value="Genome"/>
</dbReference>
<dbReference type="Proteomes" id="UP000134464">
    <property type="component" value="Genome"/>
</dbReference>
<dbReference type="Proteomes" id="UP000181145">
    <property type="component" value="Genome"/>
</dbReference>
<dbReference type="Proteomes" id="UP000181262">
    <property type="component" value="Genome"/>
</dbReference>
<dbReference type="Proteomes" id="UP000181559">
    <property type="component" value="Genome"/>
</dbReference>
<dbReference type="GO" id="GO:0005576">
    <property type="term" value="C:extracellular region"/>
    <property type="evidence" value="ECO:0000304"/>
    <property type="project" value="Reactome"/>
</dbReference>
<dbReference type="GO" id="GO:0020002">
    <property type="term" value="C:host cell plasma membrane"/>
    <property type="evidence" value="ECO:0007669"/>
    <property type="project" value="UniProtKB-SubCell"/>
</dbReference>
<dbReference type="GO" id="GO:0005886">
    <property type="term" value="C:plasma membrane"/>
    <property type="evidence" value="ECO:0000304"/>
    <property type="project" value="Reactome"/>
</dbReference>
<dbReference type="GO" id="GO:0055036">
    <property type="term" value="C:virion membrane"/>
    <property type="evidence" value="ECO:0000304"/>
    <property type="project" value="Reactome"/>
</dbReference>
<dbReference type="GO" id="GO:0098671">
    <property type="term" value="P:adhesion receptor-mediated virion attachment to host cell"/>
    <property type="evidence" value="ECO:0007669"/>
    <property type="project" value="UniProtKB-KW"/>
</dbReference>
<dbReference type="GO" id="GO:0046718">
    <property type="term" value="P:symbiont entry into host cell"/>
    <property type="evidence" value="ECO:0007669"/>
    <property type="project" value="UniProtKB-KW"/>
</dbReference>
<dbReference type="InterPro" id="IPR000925">
    <property type="entry name" value="G_prot"/>
</dbReference>
<dbReference type="Pfam" id="PF00802">
    <property type="entry name" value="Glycoprotein_G"/>
    <property type="match status" value="1"/>
</dbReference>
<organismHost>
    <name type="scientific">Homo sapiens</name>
    <name type="common">Human</name>
    <dbReference type="NCBI Taxonomy" id="9606"/>
</organismHost>
<proteinExistence type="evidence at protein level"/>
<sequence>MSKNKDQRTAKTLERTWDTLNHLLFISSCLYKLNLKSVAQITLSILAMIISTSLIIAAIIFIASANHKVTPTTAIIQDATSQIKNTTPTYLTQNPQLGISPSNPSEITSQITTILASTTPGVKSTLQSTTVKTKNTTTTQTQPSKPTTKQRQNKPPSKPNNDFHFEVFNFVPCSICSNNPTCWAICKRIPNKKPGKKTTTKPTKKPTLKTTKKDPKPQTTKSKEVPTTKPTEEPTINTTKTNIITTLLTSNTTGNPELTSQMETFHSTSSEGNPSPSQVSTTSEYPSQPSSPPNTPRQ</sequence>
<accession>P03423</accession>
<accession>Q77YB0</accession>
<reference key="1">
    <citation type="journal article" date="1985" name="Proc. Natl. Acad. Sci. U.S.A.">
        <title>Nucleotide sequence of the G protein gene of human respiratory syncytial virus reveals an unusual type of viral membrane protein.</title>
        <authorList>
            <person name="Wertz G.W."/>
            <person name="Collins P.L."/>
            <person name="Huang Y."/>
            <person name="Gruber C."/>
            <person name="Levine S."/>
            <person name="Ball L.A."/>
        </authorList>
    </citation>
    <scope>NUCLEOTIDE SEQUENCE [GENOMIC RNA]</scope>
    <scope>GLYCOSYLATION (MEMBRANE-BOUND GLYCOPROTEIN G)</scope>
</reference>
<reference key="2">
    <citation type="journal article" date="1985" name="Nucleic Acids Res.">
        <title>Respiratory syncytial virus envelope glycoprotein (G) has a novel structure.</title>
        <authorList>
            <person name="Satake M."/>
            <person name="Coligan J.E."/>
            <person name="Elango N."/>
            <person name="Norrby E."/>
            <person name="Venkatesan S."/>
        </authorList>
    </citation>
    <scope>NUCLEOTIDE SEQUENCE [GENOMIC RNA]</scope>
    <scope>GLYCOSYLATION (MEMBRANE-BOUND GLYCOPROTEIN G)</scope>
</reference>
<reference key="3">
    <citation type="journal article" date="1994" name="J. Virol.">
        <title>The membrane-associated and secreted forms of the respiratory syncytial virus attachment glycoprotein G are synthesized from alternative initiation codons.</title>
        <authorList>
            <person name="Roberts S.R."/>
            <person name="Lichtenstein D."/>
            <person name="Ball L.A."/>
            <person name="Wertz G.W."/>
        </authorList>
    </citation>
    <scope>PROTEIN SEQUENCE OF 66-93</scope>
    <scope>ALTERNATIVE INITIATION (ISOFORM SECRETED GLYCOPROTEIN G)</scope>
    <scope>GLYCOSYLATION AT THR-70; THR-72; THR-80; THR-86; THR-87 AND THR-92</scope>
    <scope>PROTEOLYTIC CLEAVAGE (ISOFORM SECRETED GLYCOPROTEIN G)</scope>
</reference>
<reference key="4">
    <citation type="journal article" date="1995" name="Virology">
        <title>A cold-passaged, attenuated strain of human respiratory syncytial virus contains mutations in the F and L genes.</title>
        <authorList>
            <person name="Connors M."/>
            <person name="Crowe J.E. Jr."/>
            <person name="Firestone C.Y."/>
            <person name="Murphy B.R."/>
            <person name="Collins P.L."/>
        </authorList>
    </citation>
    <scope>NUCLEOTIDE SEQUENCE [GENOMIC RNA]</scope>
    <source>
        <strain>Cold-passage attenuated</strain>
    </source>
</reference>
<reference key="5">
    <citation type="journal article" date="1996" name="Virus Genes">
        <title>Acquisition of the ts phenotype by a chemically mutagenized cold-passaged human respiratory syncytial virus vaccine candidate results from the acquisition of a single mutation in the polymerase (L) gene.</title>
        <authorList>
            <person name="Crowe J.E. Jr."/>
            <person name="Firestone C.Y."/>
            <person name="Whitehead S.S."/>
            <person name="Collins P.L."/>
            <person name="Murphy B.R."/>
        </authorList>
    </citation>
    <scope>NUCLEOTIDE SEQUENCE [GENOMIC RNA]</scope>
    <source>
        <strain>Cold-passage attenuated</strain>
    </source>
</reference>
<reference key="6">
    <citation type="journal article" date="1998" name="J. Virol.">
        <title>Recombinant respiratory syncytial virus (RSV) bearing a set of mutations from cold-passaged RSV is attenuated in chimpanzees.</title>
        <authorList>
            <person name="Whitehead S.S."/>
            <person name="Juhasz K."/>
            <person name="Firestone C.Y."/>
            <person name="Collins P.L."/>
            <person name="Murphy B.R."/>
        </authorList>
    </citation>
    <scope>NUCLEOTIDE SEQUENCE [GENOMIC RNA]</scope>
    <source>
        <strain>Cold-passage attenuated</strain>
    </source>
</reference>
<reference key="7">
    <citation type="journal article" date="1987" name="J. Gen. Virol.">
        <title>Demonstration that glycoprotein G is the attachment protein of respiratory syncytial virus.</title>
        <authorList>
            <person name="Levine S."/>
            <person name="Klaiber-Franco R."/>
            <person name="Paradiso P.R."/>
        </authorList>
    </citation>
    <scope>FUNCTION (MEMBRANE-BOUND GLYCOPROTEIN G)</scope>
</reference>
<reference key="8">
    <citation type="journal article" date="1990" name="J. Virol.">
        <title>O glycosylation of glycoprotein G of human respiratory syncytial virus is specified within the divergent ectodomain.</title>
        <authorList>
            <person name="Collins P.L."/>
        </authorList>
    </citation>
    <scope>SUBCELLULAR LOCATION (MEMBRANE-BOUND GLYCOPROTEIN G)</scope>
    <scope>GLYCOSYLATION</scope>
    <scope>TOPOLOGY</scope>
</reference>
<reference key="9">
    <citation type="journal article" date="1992" name="J. Gen. Virol.">
        <title>Oligomerization and post-translational processing of glycoprotein G of human respiratory syncytial virus: altered O-glycosylation in the presence of brefeldin A.</title>
        <authorList>
            <person name="Collins P.L."/>
            <person name="Mottet G."/>
        </authorList>
    </citation>
    <scope>PALMITOYLATION</scope>
    <scope>SUBUNIT (MEMBRANE-BOUND GLYCOPROTEIN G)</scope>
    <scope>GLYCOSYLATION (MEMBRANE-BOUND GLYCOPROTEIN G)</scope>
</reference>
<reference key="10">
    <citation type="journal article" date="1997" name="Protein Sci.">
        <title>Determination of the disulfide bond arrangement of human respiratory syncytial virus attachment (G) protein by matrix-assisted laser desorption/ionization time-of-flight mass spectrometry.</title>
        <authorList>
            <person name="Gorman J.J."/>
            <person name="Ferguson B.L."/>
            <person name="Speelman D."/>
            <person name="Mills J."/>
        </authorList>
    </citation>
    <scope>DISULFIDE BONDS</scope>
</reference>
<reference key="11">
    <citation type="journal article" date="1999" name="J. Virol.">
        <title>Identification of a linear heparin binding domain for human respiratory syncytial virus attachment glycoprotein G.</title>
        <authorList>
            <person name="Feldman S.A."/>
            <person name="Hendry R.M."/>
            <person name="Beeler J.A."/>
        </authorList>
    </citation>
    <scope>DOMAIN (ISOFORM MEMBRANE-BOUND GLYCOPROTEIN G)</scope>
    <scope>FUNCTION (MEMBRANE-BOUND GLYCOPROTEIN G)</scope>
    <scope>INTERACTION WITH HOST HEPARATE SULFATE (ISOFORM MEMBRANE-BOUND GLYCOPROTEIN G)</scope>
</reference>
<reference key="12">
    <citation type="journal article" date="2000" name="J. Virol.">
        <title>The fusion glycoprotein of human respiratory syncytial virus facilitates virus attachment and infectivity via an interaction with cellular heparan sulfate.</title>
        <authorList>
            <person name="Feldman S.A."/>
            <person name="Audet S."/>
            <person name="Beeler J.A."/>
        </authorList>
    </citation>
    <scope>FUNCTION (ISOFORM MEMBRANE-BOUND GLYCOPROTEIN G)</scope>
</reference>
<reference key="13">
    <citation type="journal article" date="2001" name="Nat. Immunol.">
        <title>CX3C chemokine mimicry by respiratory syncytial virus G glycoprotein.</title>
        <authorList>
            <person name="Tripp R.A."/>
            <person name="Jones L.P."/>
            <person name="Haynes L.M."/>
            <person name="Zheng H."/>
            <person name="Murphy P.M."/>
            <person name="Anderson L.J."/>
        </authorList>
    </citation>
    <scope>INTERACTION WITH HOST CX3CR1 (ISOFORM MEMBRANE-BOUND GLYCOPROTEIN G)</scope>
    <scope>FUNCTION (ISOFORM MEMBRANE-BOUND GLYCOPROTEIN G)</scope>
</reference>
<reference key="14">
    <citation type="journal article" date="2005" name="J. Gen. Virol.">
        <title>The respiratory syncytial virus small hydrophobic protein is phosphorylated via a mitogen-activated protein kinase p38-dependent tyrosine kinase activity during virus infection.</title>
        <authorList>
            <person name="Rixon H.W."/>
            <person name="Brown G."/>
            <person name="Murray J.T."/>
            <person name="Sugrue R.J."/>
        </authorList>
    </citation>
    <scope>INTERACTION WITH SH (ISOFORM MEMBRANE-BOUND GLYCOPROTEIN G)</scope>
</reference>
<reference key="15">
    <citation type="journal article" date="2005" name="J. Gen. Virol.">
        <title>Interaction between the respiratory syncytial virus G glycoprotein cytoplasmic domain and the matrix protein.</title>
        <authorList>
            <person name="Ghildyal R."/>
            <person name="Li D."/>
            <person name="Peroulis I."/>
            <person name="Shields B."/>
            <person name="Bardin P.G."/>
            <person name="Teng M.N."/>
            <person name="Collins P.L."/>
            <person name="Meanger J."/>
            <person name="Mills J."/>
        </authorList>
    </citation>
    <scope>MUTAGENESIS OF SER-2; LYS-3; ASN-4; LYS-5; ASP-6 AND GLN-7</scope>
    <scope>INTERACTION WITH M PROTEIN (ISOFORM MEMBRANE-BOUND GLYCOPROTEIN G)</scope>
    <scope>SUBCELLULAR LOCATION (ISOFORM MEMBRANE-BOUND GLYCOPROTEIN G)</scope>
</reference>
<reference key="16">
    <citation type="journal article" date="2008" name="Biochem. Biophys. Res. Commun.">
        <title>The RSV F and G glycoproteins interact to form a complex on the surface of infected cells.</title>
        <authorList>
            <person name="Low K.W."/>
            <person name="Tan T."/>
            <person name="Ng K."/>
            <person name="Tan B.H."/>
            <person name="Sugrue R.J."/>
        </authorList>
    </citation>
    <scope>IDENTIFICATION IN A COMPLEX WITH F1; F2 AND G GLYCOPROTEIN (ISOFORM MEMBRANE-BOUND GLYCOPROTEIN G)</scope>
</reference>
<reference key="17">
    <citation type="journal article" date="2008" name="J. Virol.">
        <title>The secreted form of respiratory syncytial virus G glycoprotein helps the virus evade antibody-mediated restriction of replication by acting as an antigen decoy and through effects on fc receptor-bearing leukocytes.</title>
        <authorList>
            <person name="Bukreyev A."/>
            <person name="Yang L."/>
            <person name="Fricke J."/>
            <person name="Cheng L."/>
            <person name="Ward J.M."/>
            <person name="Murphy B.R."/>
            <person name="Collins P.L."/>
        </authorList>
    </citation>
    <scope>FUNCTION (ISOFORM SECRETED GLYCOPROTEIN G)</scope>
</reference>
<reference key="18">
    <citation type="journal article" date="2012" name="J. Virol.">
        <title>Respiratory syncytial virus glycoprotein G interacts with DC-SIGN and L-SIGN to activate ERK1 and ERK2.</title>
        <authorList>
            <person name="Johnson T.R."/>
            <person name="McLellan J.S."/>
            <person name="Graham B.S."/>
        </authorList>
    </citation>
    <scope>INTERACTION WITH HOST CD209 AND CD209L (ISOFORM MEMBRANE-BOUND GLYCOPROTEIN G)</scope>
</reference>
<reference key="19">
    <citation type="journal article" date="2015" name="PLoS Pathog.">
        <title>Respiratory Syncytial Virus Uses CX3CR1 as a Receptor on Primary Human Airway Epithelial Cultures.</title>
        <authorList>
            <person name="Johnson S.M."/>
            <person name="McNally B.A."/>
            <person name="Ioannidis I."/>
            <person name="Flano E."/>
            <person name="Teng M.N."/>
            <person name="Oomens A.G."/>
            <person name="Walsh E.E."/>
            <person name="Peeples M.E."/>
        </authorList>
    </citation>
    <scope>FUNCTION (ISOFORM MEMBRANE-BOUND GLYCOPROTEIN G)</scope>
    <scope>INTERACTION WITH HOST CX3CR1 (ISOFORM MEMBRANE-BOUND GLYCOPROTEIN G)</scope>
</reference>
<reference key="20">
    <citation type="journal article" date="2015" name="PLoS ONE">
        <title>CX3CR1 Is Expressed in Differentiated Human Ciliated Airway Cells and Co-Localizes with Respiratory Syncytial Virus on Cilia in a G Protein-Dependent Manner.</title>
        <authorList>
            <person name="Jeong K.I."/>
            <person name="Piepenhagen P.A."/>
            <person name="Kishko M."/>
            <person name="DiNapoli J.M."/>
            <person name="Groppo R.P."/>
            <person name="Zhang L."/>
            <person name="Almond J."/>
            <person name="Kleanthous H."/>
            <person name="Delagrave S."/>
            <person name="Parrington M."/>
        </authorList>
    </citation>
    <scope>FUNCTION (ISOFORM MEMBRANE-BOUND GLYCOPROTEIN G)</scope>
</reference>
<reference key="21">
    <citation type="journal article" date="2017" name="Nat. Commun.">
        <title>RSV glycoprotein and genomic RNA dynamics reveal filament assembly prior to the plasma membrane.</title>
        <authorList>
            <person name="Vanover D."/>
            <person name="Smith D.V."/>
            <person name="Blanchard E.L."/>
            <person name="Alonas E."/>
            <person name="Kirschman J.L."/>
            <person name="Lifland A.W."/>
            <person name="Zurla C."/>
            <person name="Santangelo P.J."/>
        </authorList>
    </citation>
    <scope>SUBCELLULAR LOCATION (ISOFORM MEMBRANE-BOUND GLYCOPROTEIN G)</scope>
</reference>
<reference evidence="27 28 29" key="22">
    <citation type="journal article" date="2018" name="Sci. Immunol.">
        <title>Structures of respiratory syncytial virus G antigen bound to broadly neutralizing antibodies.</title>
        <authorList>
            <person name="Fedechkin S.O."/>
            <person name="George N.L."/>
            <person name="Wolff J.T."/>
            <person name="Kauvar L.M."/>
            <person name="DuBois R.M."/>
        </authorList>
    </citation>
    <scope>X-RAY CRYSTALLOGRAPHY (1.55 ANGSTROMS) OF 161-197</scope>
</reference>
<reference evidence="30" key="23">
    <citation type="journal article" date="2020" name="J. Virol.">
        <title>Conformational Flexibility in Respiratory Syncytial Virus G Neutralizing Epitopes.</title>
        <authorList>
            <person name="Fedechkin S.O."/>
            <person name="George N.L."/>
            <person name="Nunez Castrejon A.M."/>
            <person name="Dillen J.R."/>
            <person name="Kauvar L.M."/>
            <person name="DuBois R.M."/>
        </authorList>
    </citation>
    <scope>X-RAY CRYSTALLOGRAPHY (2.90 ANGSTROMS) OF 157-197</scope>
</reference>
<protein>
    <recommendedName>
        <fullName>Major surface glycoprotein G</fullName>
    </recommendedName>
    <alternativeName>
        <fullName>Attachment glycoprotein G</fullName>
    </alternativeName>
    <alternativeName>
        <fullName>Membrane-bound glycoprotein</fullName>
        <shortName>mG</shortName>
    </alternativeName>
    <component>
        <recommendedName>
            <fullName evidence="1">Mature secreted glycoprotein G</fullName>
            <shortName evidence="1">Mature sG</shortName>
        </recommendedName>
    </component>
</protein>
<keyword id="KW-0002">3D-structure</keyword>
<keyword id="KW-0024">Alternative initiation</keyword>
<keyword id="KW-0903">Direct protein sequencing</keyword>
<keyword id="KW-1015">Disulfide bond</keyword>
<keyword id="KW-0325">Glycoprotein</keyword>
<keyword id="KW-1032">Host cell membrane</keyword>
<keyword id="KW-1043">Host membrane</keyword>
<keyword id="KW-0945">Host-virus interaction</keyword>
<keyword id="KW-0472">Membrane</keyword>
<keyword id="KW-0964">Secreted</keyword>
<keyword id="KW-0812">Transmembrane</keyword>
<keyword id="KW-1133">Transmembrane helix</keyword>
<keyword id="KW-1233">Viral attachment to host adhesion receptor</keyword>
<keyword id="KW-1161">Viral attachment to host cell</keyword>
<keyword id="KW-0899">Viral immunoevasion</keyword>
<keyword id="KW-0946">Virion</keyword>
<keyword id="KW-1160">Virus entry into host cell</keyword>
<gene>
    <name type="primary">G</name>
</gene>
<comment type="function">
    <molecule>Isoform Membrane-bound glycoprotein G</molecule>
    <text evidence="4 5 6 14 15 17 23">Attaches the virion to the host cell membrane by interacting with heparan sulfate, initiating the infection (PubMed:10400758, PubMed:10864656, PubMed:3655746). Interacts with host CX3CR1, the receptor for the CX3C chemokine fractalkine, to modulate the immune response and facilitate infection (PubMed:11477410, PubMed:26107373, PubMed:26658574). Unlike the other paramyxovirus attachment proteins, lacks both neuraminidase and hemagglutinating activities (Probable).</text>
</comment>
<comment type="function">
    <molecule>Isoform Secreted glycoprotein G</molecule>
    <text evidence="11">Helps the virus escape antibody-dependent restriction of replication by acting as an antigen decoy and by modulating the activity of leukocytes bearing Fc-gamma receptors.</text>
</comment>
<comment type="subunit">
    <molecule>Isoform Membrane-bound glycoprotein G</molecule>
    <text evidence="4 6 7 8 9 10 13 15">Homooligomer (PubMed:1634876). Interacts (via N-terminus) with protein M (PubMed:15958665). Part of a complex composed of F1, F2 and G glycoproteins (PubMed:18036342). Interacts with protein SH (PubMed:15659757). Interacts with host heparate sulfate; this interaction probably participates in the viral attachment to the host cell (PubMed:10400758). Interacts with host CX3CR1; this interaction plays an important role in viral entry (PubMed:11477410, PubMed:26658574). Interacts with the host lectins CD209/DC-SIGN and CD209L/L-SIGN on dendritic cells; these interactions stimulate the phosphorylation of MAPK3/ERK1 and MAPK1/ERK2, which inhibits dendritic cell activation and could participate in the limited immunity against RSV reinfection (PubMed:22090124).</text>
</comment>
<comment type="subcellular location">
    <molecule>Isoform Membrane-bound glycoprotein G</molecule>
    <subcellularLocation>
        <location evidence="8">Virion membrane</location>
        <topology evidence="22">Single-pass type II membrane protein</topology>
    </subcellularLocation>
    <subcellularLocation>
        <location evidence="8 16">Host cell membrane</location>
        <topology evidence="22">Single-pass type II membrane protein</topology>
    </subcellularLocation>
</comment>
<comment type="subcellular location">
    <molecule>Isoform Secreted glycoprotein G</molecule>
    <subcellularLocation>
        <location evidence="1">Secreted</location>
    </subcellularLocation>
    <text evidence="1">The protein is shed from infected cells before the appearance of progeny virus (By similarity). The initiation at the downstream methionine removes a portion of the transmembrane domain. The remaining hydrophobic portion of the sG protein is essential for translocating it into the lumen of the ER during translation and would likely maintain its membrane association until a proteolytic event releases the mature sG protein into the medium (By similarity).</text>
</comment>
<comment type="alternative products">
    <event type="alternative initiation"/>
    <isoform>
        <id>P03423-1</id>
        <name>Membrane-bound glycoprotein G</name>
        <sequence type="displayed"/>
    </isoform>
    <isoform>
        <id>P03423-2</id>
        <name>Secreted glycoprotein G</name>
        <name>sG</name>
        <sequence type="described" ref="VSP_036039"/>
    </isoform>
</comment>
<comment type="domain">
    <molecule>Isoform Membrane-bound glycoprotein G</molecule>
    <text evidence="4">Contains a linear heparin binding domain essential for virus attachment to the host.</text>
</comment>
<comment type="PTM">
    <molecule>Isoform Secreted glycoprotein G</molecule>
    <text evidence="1">Cleaved to give rise to the mature sG protein which lacks the transmembrane domain.</text>
</comment>
<comment type="PTM">
    <molecule>Isoform Membrane-bound glycoprotein G</molecule>
    <text evidence="9 12 18 19">N- and O-glycosylated (PubMed:4069997). May carry 30-40 separate O-linked carbohydrate chains distributed among the 91 serine and threonine residues (PubMed:1634876, PubMed:2164608, PubMed:3858865).</text>
</comment>
<comment type="PTM">
    <molecule>Isoform Membrane-bound glycoprotein G</molecule>
    <text evidence="9">Palmitoylated.</text>
</comment>
<comment type="similarity">
    <text evidence="23">Belongs to the pneumoviruses glycoprotein G family.</text>
</comment>
<feature type="chain" id="PRO_0000142855" description="Major surface glycoprotein G">
    <location>
        <begin position="1"/>
        <end position="298"/>
    </location>
</feature>
<feature type="chain" id="PRO_0000451323" description="Mature secreted glycoprotein G">
    <location>
        <begin position="66"/>
        <end position="298"/>
    </location>
</feature>
<feature type="topological domain" description="Cytoplasmic" evidence="25">
    <location>
        <begin position="1"/>
        <end position="42"/>
    </location>
</feature>
<feature type="transmembrane region" description="Helical" evidence="2">
    <location>
        <begin position="43"/>
        <end position="63"/>
    </location>
</feature>
<feature type="topological domain" description="Extracellular" evidence="25">
    <location>
        <begin position="64"/>
        <end position="298"/>
    </location>
</feature>
<feature type="region of interest" description="Disordered" evidence="3">
    <location>
        <begin position="125"/>
        <end position="161"/>
    </location>
</feature>
<feature type="region of interest" description="Binding to host heparan sulfate" evidence="24">
    <location>
        <begin position="187"/>
        <end position="198"/>
    </location>
</feature>
<feature type="region of interest" description="Disordered" evidence="3">
    <location>
        <begin position="190"/>
        <end position="298"/>
    </location>
</feature>
<feature type="compositionally biased region" description="Low complexity" evidence="3">
    <location>
        <begin position="125"/>
        <end position="150"/>
    </location>
</feature>
<feature type="compositionally biased region" description="Basic residues" evidence="3">
    <location>
        <begin position="190"/>
        <end position="207"/>
    </location>
</feature>
<feature type="compositionally biased region" description="Basic and acidic residues" evidence="3">
    <location>
        <begin position="211"/>
        <end position="232"/>
    </location>
</feature>
<feature type="compositionally biased region" description="Low complexity" evidence="3">
    <location>
        <begin position="233"/>
        <end position="253"/>
    </location>
</feature>
<feature type="compositionally biased region" description="Polar residues" evidence="3">
    <location>
        <begin position="254"/>
        <end position="288"/>
    </location>
</feature>
<feature type="compositionally biased region" description="Pro residues" evidence="3">
    <location>
        <begin position="289"/>
        <end position="298"/>
    </location>
</feature>
<feature type="site" description="Cleavage" evidence="20">
    <location>
        <begin position="65"/>
        <end position="66"/>
    </location>
</feature>
<feature type="glycosylation site" description="O-linked (GalNAc...) threonine; by host" evidence="26">
    <location>
        <position position="70"/>
    </location>
</feature>
<feature type="glycosylation site" description="O-linked (GalNAc...) threonine; by host" evidence="26">
    <location>
        <position position="72"/>
    </location>
</feature>
<feature type="glycosylation site" description="O-linked (GalNAc...) threonine; by host" evidence="26">
    <location>
        <position position="80"/>
    </location>
</feature>
<feature type="glycosylation site" description="O-linked (GalNAc...) threonine; by host" evidence="26">
    <location>
        <position position="86"/>
    </location>
</feature>
<feature type="glycosylation site" description="O-linked (GalNAc...) threonine; by host" evidence="26">
    <location>
        <position position="87"/>
    </location>
</feature>
<feature type="glycosylation site" description="O-linked (GalNAc...) threonine; by host" evidence="26">
    <location>
        <position position="92"/>
    </location>
</feature>
<feature type="glycosylation site" description="O-linked (GalNAc...) serine; by host" evidence="2">
    <location>
        <position position="100"/>
    </location>
</feature>
<feature type="glycosylation site" description="O-linked (GalNAc...) serine; by host" evidence="2">
    <location>
        <position position="105"/>
    </location>
</feature>
<feature type="glycosylation site" description="O-linked (GalNAc...) threonine; by host" evidence="2">
    <location>
        <position position="113"/>
    </location>
</feature>
<feature type="glycosylation site" description="O-linked (GalNAc...) serine; by host" evidence="2">
    <location>
        <position position="117"/>
    </location>
</feature>
<feature type="glycosylation site" description="O-linked (GalNAc...) threonine; by host" evidence="2">
    <location>
        <position position="119"/>
    </location>
</feature>
<feature type="glycosylation site" description="N-linked (GlcNAc...) asparagine; by host" evidence="2">
    <location>
        <position position="135"/>
    </location>
</feature>
<feature type="glycosylation site" description="O-linked (GalNAc...) threonine; by host" evidence="2">
    <location>
        <position position="137"/>
    </location>
</feature>
<feature type="glycosylation site" description="O-linked (GalNAc...) threonine; by host" evidence="2">
    <location>
        <position position="138"/>
    </location>
</feature>
<feature type="glycosylation site" description="O-linked (GalNAc...) threonine; by host" evidence="2">
    <location>
        <position position="139"/>
    </location>
</feature>
<feature type="glycosylation site" description="O-linked (GalNAc...) threonine; by host" evidence="2">
    <location>
        <position position="141"/>
    </location>
</feature>
<feature type="glycosylation site" description="O-linked (GalNAc...) serine; by host" evidence="2">
    <location>
        <position position="144"/>
    </location>
</feature>
<feature type="glycosylation site" description="O-linked (GalNAc...) threonine; by host" evidence="2">
    <location>
        <position position="147"/>
    </location>
</feature>
<feature type="glycosylation site" description="O-linked (GalNAc...) threonine; by host" evidence="2">
    <location>
        <position position="199"/>
    </location>
</feature>
<feature type="glycosylation site" description="O-linked (GalNAc...) threonine; by host" evidence="2">
    <location>
        <position position="203"/>
    </location>
</feature>
<feature type="glycosylation site" description="O-linked (GalNAc...) threonine; by host" evidence="2">
    <location>
        <position position="219"/>
    </location>
</feature>
<feature type="glycosylation site" description="O-linked (GalNAc...) threonine; by host" evidence="2">
    <location>
        <position position="231"/>
    </location>
</feature>
<feature type="glycosylation site" description="O-linked (GalNAc...) threonine; by host" evidence="2">
    <location>
        <position position="235"/>
    </location>
</feature>
<feature type="glycosylation site" description="N-linked (GlcNAc...) asparagine; by host" evidence="2">
    <location>
        <position position="237"/>
    </location>
</feature>
<feature type="glycosylation site" description="N-linked (GlcNAc...) asparagine; by host" evidence="2">
    <location>
        <position position="251"/>
    </location>
</feature>
<feature type="glycosylation site" description="O-linked (GalNAc...) threonine; by host" evidence="2">
    <location>
        <position position="253"/>
    </location>
</feature>
<feature type="glycosylation site" description="O-linked (GalNAc...) serine; by host" evidence="2">
    <location>
        <position position="269"/>
    </location>
</feature>
<feature type="glycosylation site" description="O-linked (GlcNAc...) serine; by host" evidence="2">
    <location>
        <position position="270"/>
    </location>
</feature>
<feature type="glycosylation site" description="O-linked (GalNAc...) serine; by host" evidence="2">
    <location>
        <position position="275"/>
    </location>
</feature>
<feature type="glycosylation site" description="O-linked (GalNAc...) threonine; by host" evidence="2">
    <location>
        <position position="282"/>
    </location>
</feature>
<feature type="glycosylation site" description="O-linked (GalNAc...) serine; by host" evidence="2">
    <location>
        <position position="283"/>
    </location>
</feature>
<feature type="glycosylation site" description="O-linked (GalNAc...) serine; by host" evidence="2">
    <location>
        <position position="287"/>
    </location>
</feature>
<feature type="glycosylation site" description="O-linked (GalNAc...) serine; by host" evidence="2">
    <location>
        <position position="290"/>
    </location>
</feature>
<feature type="disulfide bond" evidence="21">
    <location>
        <begin position="173"/>
        <end position="186"/>
    </location>
</feature>
<feature type="disulfide bond" evidence="21">
    <location>
        <begin position="176"/>
        <end position="182"/>
    </location>
</feature>
<feature type="splice variant" id="VSP_036039" description="In isoform Secreted glycoprotein G." evidence="20">
    <location>
        <begin position="1"/>
        <end position="47"/>
    </location>
</feature>
<feature type="mutagenesis site" description="Complete loss of interaction with protein M." evidence="8">
    <original>S</original>
    <variation>A</variation>
    <location>
        <position position="2"/>
    </location>
</feature>
<feature type="mutagenesis site" description="Partial loss of interaction with protein M." evidence="8">
    <original>K</original>
    <variation>A</variation>
    <location>
        <position position="3"/>
    </location>
</feature>
<feature type="mutagenesis site" description="Partial loss of interaction with protein M." evidence="8">
    <original>N</original>
    <variation>A</variation>
    <location>
        <position position="4"/>
    </location>
</feature>
<feature type="mutagenesis site" description="Partial loss of interaction with protein M." evidence="8">
    <original>K</original>
    <variation>A</variation>
    <location>
        <position position="5"/>
    </location>
</feature>
<feature type="mutagenesis site" description="Complete loss of interaction with protein M." evidence="8">
    <original>D</original>
    <variation>A</variation>
    <location>
        <position position="6"/>
    </location>
</feature>
<feature type="mutagenesis site" description="Partial loss of interaction with protein M." evidence="8">
    <original>Q</original>
    <variation>AQ</variation>
    <location>
        <position position="7"/>
    </location>
</feature>
<feature type="helix" evidence="32">
    <location>
        <begin position="165"/>
        <end position="168"/>
    </location>
</feature>
<feature type="helix" evidence="31">
    <location>
        <begin position="173"/>
        <end position="175"/>
    </location>
</feature>
<feature type="turn" evidence="32">
    <location>
        <begin position="176"/>
        <end position="178"/>
    </location>
</feature>
<feature type="helix" evidence="31">
    <location>
        <begin position="180"/>
        <end position="185"/>
    </location>
</feature>
<organism>
    <name type="scientific">Human respiratory syncytial virus A (strain A2)</name>
    <dbReference type="NCBI Taxonomy" id="11259"/>
    <lineage>
        <taxon>Viruses</taxon>
        <taxon>Riboviria</taxon>
        <taxon>Orthornavirae</taxon>
        <taxon>Negarnaviricota</taxon>
        <taxon>Haploviricotina</taxon>
        <taxon>Monjiviricetes</taxon>
        <taxon>Mononegavirales</taxon>
        <taxon>Pneumoviridae</taxon>
        <taxon>Orthopneumovirus</taxon>
        <taxon>Orthopneumovirus hominis</taxon>
    </lineage>
</organism>
<evidence type="ECO:0000250" key="1">
    <source>
        <dbReference type="UniProtKB" id="P20895"/>
    </source>
</evidence>
<evidence type="ECO:0000255" key="2"/>
<evidence type="ECO:0000256" key="3">
    <source>
        <dbReference type="SAM" id="MobiDB-lite"/>
    </source>
</evidence>
<evidence type="ECO:0000269" key="4">
    <source>
    </source>
</evidence>
<evidence type="ECO:0000269" key="5">
    <source>
    </source>
</evidence>
<evidence type="ECO:0000269" key="6">
    <source>
    </source>
</evidence>
<evidence type="ECO:0000269" key="7">
    <source>
    </source>
</evidence>
<evidence type="ECO:0000269" key="8">
    <source>
    </source>
</evidence>
<evidence type="ECO:0000269" key="9">
    <source>
    </source>
</evidence>
<evidence type="ECO:0000269" key="10">
    <source>
    </source>
</evidence>
<evidence type="ECO:0000269" key="11">
    <source>
    </source>
</evidence>
<evidence type="ECO:0000269" key="12">
    <source>
    </source>
</evidence>
<evidence type="ECO:0000269" key="13">
    <source>
    </source>
</evidence>
<evidence type="ECO:0000269" key="14">
    <source>
    </source>
</evidence>
<evidence type="ECO:0000269" key="15">
    <source>
    </source>
</evidence>
<evidence type="ECO:0000269" key="16">
    <source>
    </source>
</evidence>
<evidence type="ECO:0000269" key="17">
    <source>
    </source>
</evidence>
<evidence type="ECO:0000269" key="18">
    <source>
    </source>
</evidence>
<evidence type="ECO:0000269" key="19">
    <source>
    </source>
</evidence>
<evidence type="ECO:0000269" key="20">
    <source>
    </source>
</evidence>
<evidence type="ECO:0000269" key="21">
    <source>
    </source>
</evidence>
<evidence type="ECO:0000303" key="22">
    <source>
    </source>
</evidence>
<evidence type="ECO:0000305" key="23"/>
<evidence type="ECO:0000305" key="24">
    <source>
    </source>
</evidence>
<evidence type="ECO:0000305" key="25">
    <source>
    </source>
</evidence>
<evidence type="ECO:0000305" key="26">
    <source>
    </source>
</evidence>
<evidence type="ECO:0007744" key="27">
    <source>
        <dbReference type="PDB" id="5WN9"/>
    </source>
</evidence>
<evidence type="ECO:0007744" key="28">
    <source>
        <dbReference type="PDB" id="5WNA"/>
    </source>
</evidence>
<evidence type="ECO:0007744" key="29">
    <source>
        <dbReference type="PDB" id="5WNB"/>
    </source>
</evidence>
<evidence type="ECO:0007744" key="30">
    <source>
        <dbReference type="PDB" id="6UVO"/>
    </source>
</evidence>
<evidence type="ECO:0007829" key="31">
    <source>
        <dbReference type="PDB" id="5WN9"/>
    </source>
</evidence>
<evidence type="ECO:0007829" key="32">
    <source>
        <dbReference type="PDB" id="5WNA"/>
    </source>
</evidence>
<name>GLYC_HRSVA</name>